<gene>
    <name evidence="1" type="primary">metG</name>
    <name type="ordered locus">Sbal_2465</name>
</gene>
<dbReference type="EC" id="6.1.1.10" evidence="1"/>
<dbReference type="EMBL" id="CP000563">
    <property type="protein sequence ID" value="ABN61958.1"/>
    <property type="molecule type" value="Genomic_DNA"/>
</dbReference>
<dbReference type="RefSeq" id="WP_011846995.1">
    <property type="nucleotide sequence ID" value="NC_009052.1"/>
</dbReference>
<dbReference type="SMR" id="A3D5E5"/>
<dbReference type="STRING" id="325240.Sbal_2465"/>
<dbReference type="KEGG" id="sbl:Sbal_2465"/>
<dbReference type="HOGENOM" id="CLU_009710_7_0_6"/>
<dbReference type="OrthoDB" id="9810191at2"/>
<dbReference type="Proteomes" id="UP000001557">
    <property type="component" value="Chromosome"/>
</dbReference>
<dbReference type="GO" id="GO:0005829">
    <property type="term" value="C:cytosol"/>
    <property type="evidence" value="ECO:0007669"/>
    <property type="project" value="TreeGrafter"/>
</dbReference>
<dbReference type="GO" id="GO:0005524">
    <property type="term" value="F:ATP binding"/>
    <property type="evidence" value="ECO:0007669"/>
    <property type="project" value="UniProtKB-UniRule"/>
</dbReference>
<dbReference type="GO" id="GO:0046872">
    <property type="term" value="F:metal ion binding"/>
    <property type="evidence" value="ECO:0007669"/>
    <property type="project" value="UniProtKB-KW"/>
</dbReference>
<dbReference type="GO" id="GO:0004825">
    <property type="term" value="F:methionine-tRNA ligase activity"/>
    <property type="evidence" value="ECO:0007669"/>
    <property type="project" value="UniProtKB-UniRule"/>
</dbReference>
<dbReference type="GO" id="GO:0000049">
    <property type="term" value="F:tRNA binding"/>
    <property type="evidence" value="ECO:0007669"/>
    <property type="project" value="UniProtKB-KW"/>
</dbReference>
<dbReference type="GO" id="GO:0006431">
    <property type="term" value="P:methionyl-tRNA aminoacylation"/>
    <property type="evidence" value="ECO:0007669"/>
    <property type="project" value="UniProtKB-UniRule"/>
</dbReference>
<dbReference type="CDD" id="cd07957">
    <property type="entry name" value="Anticodon_Ia_Met"/>
    <property type="match status" value="1"/>
</dbReference>
<dbReference type="CDD" id="cd00814">
    <property type="entry name" value="MetRS_core"/>
    <property type="match status" value="1"/>
</dbReference>
<dbReference type="CDD" id="cd02800">
    <property type="entry name" value="tRNA_bind_EcMetRS_like"/>
    <property type="match status" value="1"/>
</dbReference>
<dbReference type="FunFam" id="1.10.730.10:FF:000005">
    <property type="entry name" value="Methionine--tRNA ligase"/>
    <property type="match status" value="1"/>
</dbReference>
<dbReference type="FunFam" id="2.20.28.20:FF:000001">
    <property type="entry name" value="Methionine--tRNA ligase"/>
    <property type="match status" value="1"/>
</dbReference>
<dbReference type="FunFam" id="2.40.50.140:FF:000042">
    <property type="entry name" value="Methionine--tRNA ligase"/>
    <property type="match status" value="1"/>
</dbReference>
<dbReference type="Gene3D" id="3.40.50.620">
    <property type="entry name" value="HUPs"/>
    <property type="match status" value="1"/>
</dbReference>
<dbReference type="Gene3D" id="1.10.730.10">
    <property type="entry name" value="Isoleucyl-tRNA Synthetase, Domain 1"/>
    <property type="match status" value="1"/>
</dbReference>
<dbReference type="Gene3D" id="2.20.28.20">
    <property type="entry name" value="Methionyl-tRNA synthetase, Zn-domain"/>
    <property type="match status" value="1"/>
</dbReference>
<dbReference type="Gene3D" id="2.40.50.140">
    <property type="entry name" value="Nucleic acid-binding proteins"/>
    <property type="match status" value="1"/>
</dbReference>
<dbReference type="HAMAP" id="MF_00098">
    <property type="entry name" value="Met_tRNA_synth_type1"/>
    <property type="match status" value="1"/>
</dbReference>
<dbReference type="InterPro" id="IPR001412">
    <property type="entry name" value="aa-tRNA-synth_I_CS"/>
</dbReference>
<dbReference type="InterPro" id="IPR041872">
    <property type="entry name" value="Anticodon_Met"/>
</dbReference>
<dbReference type="InterPro" id="IPR004495">
    <property type="entry name" value="Met-tRNA-synth_bsu_C"/>
</dbReference>
<dbReference type="InterPro" id="IPR023458">
    <property type="entry name" value="Met-tRNA_ligase_1"/>
</dbReference>
<dbReference type="InterPro" id="IPR014758">
    <property type="entry name" value="Met-tRNA_synth"/>
</dbReference>
<dbReference type="InterPro" id="IPR015413">
    <property type="entry name" value="Methionyl/Leucyl_tRNA_Synth"/>
</dbReference>
<dbReference type="InterPro" id="IPR033911">
    <property type="entry name" value="MetRS_core"/>
</dbReference>
<dbReference type="InterPro" id="IPR029038">
    <property type="entry name" value="MetRS_Zn"/>
</dbReference>
<dbReference type="InterPro" id="IPR012340">
    <property type="entry name" value="NA-bd_OB-fold"/>
</dbReference>
<dbReference type="InterPro" id="IPR014729">
    <property type="entry name" value="Rossmann-like_a/b/a_fold"/>
</dbReference>
<dbReference type="InterPro" id="IPR002547">
    <property type="entry name" value="tRNA-bd_dom"/>
</dbReference>
<dbReference type="InterPro" id="IPR009080">
    <property type="entry name" value="tRNAsynth_Ia_anticodon-bd"/>
</dbReference>
<dbReference type="NCBIfam" id="TIGR00398">
    <property type="entry name" value="metG"/>
    <property type="match status" value="1"/>
</dbReference>
<dbReference type="NCBIfam" id="TIGR00399">
    <property type="entry name" value="metG_C_term"/>
    <property type="match status" value="1"/>
</dbReference>
<dbReference type="NCBIfam" id="NF001100">
    <property type="entry name" value="PRK00133.1"/>
    <property type="match status" value="1"/>
</dbReference>
<dbReference type="PANTHER" id="PTHR45765">
    <property type="entry name" value="METHIONINE--TRNA LIGASE"/>
    <property type="match status" value="1"/>
</dbReference>
<dbReference type="PANTHER" id="PTHR45765:SF1">
    <property type="entry name" value="METHIONINE--TRNA LIGASE, CYTOPLASMIC"/>
    <property type="match status" value="1"/>
</dbReference>
<dbReference type="Pfam" id="PF19303">
    <property type="entry name" value="Anticodon_3"/>
    <property type="match status" value="1"/>
</dbReference>
<dbReference type="Pfam" id="PF09334">
    <property type="entry name" value="tRNA-synt_1g"/>
    <property type="match status" value="1"/>
</dbReference>
<dbReference type="Pfam" id="PF01588">
    <property type="entry name" value="tRNA_bind"/>
    <property type="match status" value="1"/>
</dbReference>
<dbReference type="PRINTS" id="PR01041">
    <property type="entry name" value="TRNASYNTHMET"/>
</dbReference>
<dbReference type="SUPFAM" id="SSF47323">
    <property type="entry name" value="Anticodon-binding domain of a subclass of class I aminoacyl-tRNA synthetases"/>
    <property type="match status" value="1"/>
</dbReference>
<dbReference type="SUPFAM" id="SSF57770">
    <property type="entry name" value="Methionyl-tRNA synthetase (MetRS), Zn-domain"/>
    <property type="match status" value="1"/>
</dbReference>
<dbReference type="SUPFAM" id="SSF50249">
    <property type="entry name" value="Nucleic acid-binding proteins"/>
    <property type="match status" value="1"/>
</dbReference>
<dbReference type="SUPFAM" id="SSF52374">
    <property type="entry name" value="Nucleotidylyl transferase"/>
    <property type="match status" value="1"/>
</dbReference>
<dbReference type="PROSITE" id="PS00178">
    <property type="entry name" value="AA_TRNA_LIGASE_I"/>
    <property type="match status" value="1"/>
</dbReference>
<dbReference type="PROSITE" id="PS50886">
    <property type="entry name" value="TRBD"/>
    <property type="match status" value="1"/>
</dbReference>
<name>SYM_SHEB5</name>
<accession>A3D5E5</accession>
<feature type="chain" id="PRO_0000331903" description="Methionine--tRNA ligase">
    <location>
        <begin position="1"/>
        <end position="689"/>
    </location>
</feature>
<feature type="domain" description="tRNA-binding" evidence="1">
    <location>
        <begin position="588"/>
        <end position="689"/>
    </location>
</feature>
<feature type="short sequence motif" description="'HIGH' region">
    <location>
        <begin position="15"/>
        <end position="25"/>
    </location>
</feature>
<feature type="short sequence motif" description="'KMSKS' region">
    <location>
        <begin position="332"/>
        <end position="336"/>
    </location>
</feature>
<feature type="binding site" evidence="1">
    <location>
        <position position="146"/>
    </location>
    <ligand>
        <name>Zn(2+)</name>
        <dbReference type="ChEBI" id="CHEBI:29105"/>
    </ligand>
</feature>
<feature type="binding site" evidence="1">
    <location>
        <position position="149"/>
    </location>
    <ligand>
        <name>Zn(2+)</name>
        <dbReference type="ChEBI" id="CHEBI:29105"/>
    </ligand>
</feature>
<feature type="binding site" evidence="1">
    <location>
        <position position="159"/>
    </location>
    <ligand>
        <name>Zn(2+)</name>
        <dbReference type="ChEBI" id="CHEBI:29105"/>
    </ligand>
</feature>
<feature type="binding site" evidence="1">
    <location>
        <position position="162"/>
    </location>
    <ligand>
        <name>Zn(2+)</name>
        <dbReference type="ChEBI" id="CHEBI:29105"/>
    </ligand>
</feature>
<feature type="binding site" evidence="1">
    <location>
        <position position="335"/>
    </location>
    <ligand>
        <name>ATP</name>
        <dbReference type="ChEBI" id="CHEBI:30616"/>
    </ligand>
</feature>
<organism>
    <name type="scientific">Shewanella baltica (strain OS155 / ATCC BAA-1091)</name>
    <dbReference type="NCBI Taxonomy" id="325240"/>
    <lineage>
        <taxon>Bacteria</taxon>
        <taxon>Pseudomonadati</taxon>
        <taxon>Pseudomonadota</taxon>
        <taxon>Gammaproteobacteria</taxon>
        <taxon>Alteromonadales</taxon>
        <taxon>Shewanellaceae</taxon>
        <taxon>Shewanella</taxon>
    </lineage>
</organism>
<comment type="function">
    <text evidence="1">Is required not only for elongation of protein synthesis but also for the initiation of all mRNA translation through initiator tRNA(fMet) aminoacylation.</text>
</comment>
<comment type="catalytic activity">
    <reaction evidence="1">
        <text>tRNA(Met) + L-methionine + ATP = L-methionyl-tRNA(Met) + AMP + diphosphate</text>
        <dbReference type="Rhea" id="RHEA:13481"/>
        <dbReference type="Rhea" id="RHEA-COMP:9667"/>
        <dbReference type="Rhea" id="RHEA-COMP:9698"/>
        <dbReference type="ChEBI" id="CHEBI:30616"/>
        <dbReference type="ChEBI" id="CHEBI:33019"/>
        <dbReference type="ChEBI" id="CHEBI:57844"/>
        <dbReference type="ChEBI" id="CHEBI:78442"/>
        <dbReference type="ChEBI" id="CHEBI:78530"/>
        <dbReference type="ChEBI" id="CHEBI:456215"/>
        <dbReference type="EC" id="6.1.1.10"/>
    </reaction>
</comment>
<comment type="cofactor">
    <cofactor evidence="1">
        <name>Zn(2+)</name>
        <dbReference type="ChEBI" id="CHEBI:29105"/>
    </cofactor>
    <text evidence="1">Binds 1 zinc ion per subunit.</text>
</comment>
<comment type="subunit">
    <text evidence="1">Homodimer.</text>
</comment>
<comment type="subcellular location">
    <subcellularLocation>
        <location evidence="1">Cytoplasm</location>
    </subcellularLocation>
</comment>
<comment type="similarity">
    <text evidence="1">Belongs to the class-I aminoacyl-tRNA synthetase family. MetG type 1 subfamily.</text>
</comment>
<proteinExistence type="inferred from homology"/>
<keyword id="KW-0030">Aminoacyl-tRNA synthetase</keyword>
<keyword id="KW-0067">ATP-binding</keyword>
<keyword id="KW-0963">Cytoplasm</keyword>
<keyword id="KW-0436">Ligase</keyword>
<keyword id="KW-0479">Metal-binding</keyword>
<keyword id="KW-0547">Nucleotide-binding</keyword>
<keyword id="KW-0648">Protein biosynthesis</keyword>
<keyword id="KW-1185">Reference proteome</keyword>
<keyword id="KW-0694">RNA-binding</keyword>
<keyword id="KW-0820">tRNA-binding</keyword>
<keyword id="KW-0862">Zinc</keyword>
<protein>
    <recommendedName>
        <fullName evidence="1">Methionine--tRNA ligase</fullName>
        <ecNumber evidence="1">6.1.1.10</ecNumber>
    </recommendedName>
    <alternativeName>
        <fullName evidence="1">Methionyl-tRNA synthetase</fullName>
        <shortName evidence="1">MetRS</shortName>
    </alternativeName>
</protein>
<reference key="1">
    <citation type="submission" date="2007-02" db="EMBL/GenBank/DDBJ databases">
        <title>Complete sequence of chromosome of Shewanella baltica OS155.</title>
        <authorList>
            <consortium name="US DOE Joint Genome Institute"/>
            <person name="Copeland A."/>
            <person name="Lucas S."/>
            <person name="Lapidus A."/>
            <person name="Barry K."/>
            <person name="Detter J.C."/>
            <person name="Glavina del Rio T."/>
            <person name="Hammon N."/>
            <person name="Israni S."/>
            <person name="Dalin E."/>
            <person name="Tice H."/>
            <person name="Pitluck S."/>
            <person name="Sims D.R."/>
            <person name="Brettin T."/>
            <person name="Bruce D."/>
            <person name="Han C."/>
            <person name="Tapia R."/>
            <person name="Brainard J."/>
            <person name="Schmutz J."/>
            <person name="Larimer F."/>
            <person name="Land M."/>
            <person name="Hauser L."/>
            <person name="Kyrpides N."/>
            <person name="Mikhailova N."/>
            <person name="Brettar I."/>
            <person name="Klappenbach J."/>
            <person name="Konstantinidis K."/>
            <person name="Rodrigues J."/>
            <person name="Tiedje J."/>
            <person name="Richardson P."/>
        </authorList>
    </citation>
    <scope>NUCLEOTIDE SEQUENCE [LARGE SCALE GENOMIC DNA]</scope>
    <source>
        <strain>OS155 / ATCC BAA-1091</strain>
    </source>
</reference>
<sequence>MATSQRKILVTSALPYANGPIHLGHMLEYIQTDIWSRYQKLRGHECHYICADDAHGTPIMLKAQQLGIAPEDMIAQVNKEHQQDFADFNVAFDNYHSTHSEENRLMASDIYLKLRDNGYIKSKSISQLFDPEKSMFLPDRFVKGTCPKCKSPDQYGDNCDSCGATYSPTELINPKSAVSGATPVMKDTEHFFFDLPAFEGMLKEWTRSGALQVEMANKLDEWFEQGLQQWDITRDAPYFGFEIPDAPGKYFYVWLDAPIGYMGSFKNLCAKRPELSFDEFWGKDSTAEVYHFIGKDIVYFHSLFWPAMLHGSGYRQPNSVYAHGYVTVNGAKMSKSKGTFIKARTYLDHLDPEYLRYYYAAKLSSRIDDLDLNLEDFAQRVNSDLVGKLVNLASRTAGFITKRFDGKLAKINDTTLTEAFLAKQDVIADFYESREYGKAMREIMALADIANGFVADAAPWQMVKHDDQQEAAHQVCSNALNLFRILVTYLKPVLPRLAQDVEAFFQLPLTWDALGQDLAGHEIAPFKAMMQRVELDKVNAMVADSKDNLQVTADAPKTAAPEKIAKASSVSSEPLVSDPISETINFDDFAKIDLRIARIVKAEHVADADKLLKLQLDIGGETRQVFAGIKSAYSPEDLEGKLTVMVANLAPRKMRFGMSEGMVLAAGPGGSDLWILEPHEGAQPGMRVK</sequence>
<evidence type="ECO:0000255" key="1">
    <source>
        <dbReference type="HAMAP-Rule" id="MF_00098"/>
    </source>
</evidence>